<dbReference type="EMBL" id="AJ277117">
    <property type="protein sequence ID" value="CAB83198.1"/>
    <property type="molecule type" value="Genomic_DNA"/>
</dbReference>
<dbReference type="EMBL" id="CP000009">
    <property type="protein sequence ID" value="AAW60758.1"/>
    <property type="molecule type" value="Genomic_DNA"/>
</dbReference>
<dbReference type="RefSeq" id="WP_011252553.1">
    <property type="nucleotide sequence ID" value="NZ_LT900338.1"/>
</dbReference>
<dbReference type="SMR" id="Q9L3B3"/>
<dbReference type="STRING" id="290633.GOX0986"/>
<dbReference type="KEGG" id="gox:GOX0986"/>
<dbReference type="eggNOG" id="COG1235">
    <property type="taxonomic scope" value="Bacteria"/>
</dbReference>
<dbReference type="HOGENOM" id="CLU_061120_0_0_5"/>
<dbReference type="UniPathway" id="UPA00539"/>
<dbReference type="Proteomes" id="UP000006375">
    <property type="component" value="Chromosome"/>
</dbReference>
<dbReference type="GO" id="GO:0018189">
    <property type="term" value="P:pyrroloquinoline quinone biosynthetic process"/>
    <property type="evidence" value="ECO:0007669"/>
    <property type="project" value="UniProtKB-UniRule"/>
</dbReference>
<dbReference type="Gene3D" id="3.60.15.10">
    <property type="entry name" value="Ribonuclease Z/Hydroxyacylglutathione hydrolase-like"/>
    <property type="match status" value="1"/>
</dbReference>
<dbReference type="HAMAP" id="MF_00653">
    <property type="entry name" value="PQQ_syn_PqqB"/>
    <property type="match status" value="1"/>
</dbReference>
<dbReference type="InterPro" id="IPR001279">
    <property type="entry name" value="Metallo-B-lactamas"/>
</dbReference>
<dbReference type="InterPro" id="IPR011842">
    <property type="entry name" value="PQQ_synth_PqqB"/>
</dbReference>
<dbReference type="InterPro" id="IPR036866">
    <property type="entry name" value="RibonucZ/Hydroxyglut_hydro"/>
</dbReference>
<dbReference type="NCBIfam" id="TIGR02108">
    <property type="entry name" value="PQQ_syn_pqqB"/>
    <property type="match status" value="1"/>
</dbReference>
<dbReference type="Pfam" id="PF12706">
    <property type="entry name" value="Lactamase_B_2"/>
    <property type="match status" value="1"/>
</dbReference>
<dbReference type="SUPFAM" id="SSF56281">
    <property type="entry name" value="Metallo-hydrolase/oxidoreductase"/>
    <property type="match status" value="1"/>
</dbReference>
<feature type="chain" id="PRO_0000219998" description="Coenzyme PQQ synthesis protein B">
    <location>
        <begin position="1"/>
        <end position="304"/>
    </location>
</feature>
<feature type="sequence conflict" description="In Ref. 1; CAB83198." evidence="2" ref="1">
    <original>R</original>
    <variation>G</variation>
    <location>
        <position position="37"/>
    </location>
</feature>
<feature type="sequence conflict" description="In Ref. 1; CAB83198." evidence="2" ref="1">
    <original>QIIDT</original>
    <variation>NHSDA</variation>
    <location>
        <begin position="63"/>
        <end position="67"/>
    </location>
</feature>
<feature type="sequence conflict" description="In Ref. 1; CAB83198." evidence="2" ref="1">
    <original>D</original>
    <variation>E</variation>
    <location>
        <position position="112"/>
    </location>
</feature>
<feature type="sequence conflict" description="In Ref. 1; CAB83198." evidence="2" ref="1">
    <original>A</original>
    <variation>T</variation>
    <location>
        <position position="142"/>
    </location>
</feature>
<feature type="sequence conflict" description="In Ref. 1; CAB83198." evidence="2" ref="1">
    <original>S</original>
    <variation>P</variation>
    <location>
        <position position="203"/>
    </location>
</feature>
<name>PQQB_GLUOX</name>
<evidence type="ECO:0000255" key="1">
    <source>
        <dbReference type="HAMAP-Rule" id="MF_00653"/>
    </source>
</evidence>
<evidence type="ECO:0000305" key="2"/>
<accession>Q9L3B3</accession>
<accession>Q5FS88</accession>
<organism>
    <name type="scientific">Gluconobacter oxydans (strain 621H)</name>
    <name type="common">Gluconobacter suboxydans</name>
    <dbReference type="NCBI Taxonomy" id="290633"/>
    <lineage>
        <taxon>Bacteria</taxon>
        <taxon>Pseudomonadati</taxon>
        <taxon>Pseudomonadota</taxon>
        <taxon>Alphaproteobacteria</taxon>
        <taxon>Acetobacterales</taxon>
        <taxon>Acetobacteraceae</taxon>
        <taxon>Gluconobacter</taxon>
    </lineage>
</organism>
<gene>
    <name evidence="1" type="primary">pqqB</name>
    <name type="ordered locus">GOX0986</name>
</gene>
<keyword id="KW-0884">PQQ biosynthesis</keyword>
<keyword id="KW-1185">Reference proteome</keyword>
<keyword id="KW-0813">Transport</keyword>
<sequence length="304" mass="32415">MIDVIVLGAAAGGGFPQWNSAAPGCVAARTRQGAKARTQASLAVSADGKRWFILNASPDLRQQIIDTPALHHQGSLRGTPIQGVVLTCGEIDAITGLLTLREREPFTLMGSDSTLQQLADNPIFGALDPEIVPRVPLILDEATSLMNKDGIPSGLLLTAFAVPGKAPLYAEAAGSRPDETLGLSITDGCKTMLFIPGCAQITSEIVERVAAADLVFFDGTLWRDDEMIRAGLSPKSGQRMGHVSVNDAGGPVECFTTCEKPRKVLIHINNSNPILFEDSPERKDVERAGWTVAEDGMTFRLDTP</sequence>
<proteinExistence type="inferred from homology"/>
<comment type="function">
    <text evidence="1">May be involved in the transport of PQQ or its precursor to the periplasm.</text>
</comment>
<comment type="pathway">
    <text evidence="1">Cofactor biosynthesis; pyrroloquinoline quinone biosynthesis.</text>
</comment>
<comment type="similarity">
    <text evidence="1">Belongs to the PqqB family.</text>
</comment>
<protein>
    <recommendedName>
        <fullName evidence="1">Coenzyme PQQ synthesis protein B</fullName>
    </recommendedName>
    <alternativeName>
        <fullName evidence="1">Pyrroloquinoline quinone biosynthesis protein B</fullName>
    </alternativeName>
</protein>
<reference key="1">
    <citation type="journal article" date="2000" name="FEMS Microbiol. Lett.">
        <title>The pyrroloquinoline quinone synthesis genes of Gluconobacter oxydans.</title>
        <authorList>
            <person name="Felder M."/>
            <person name="Gupta A."/>
            <person name="Verma V."/>
            <person name="Kumar A."/>
            <person name="Qazi G.N."/>
            <person name="Cullum J."/>
        </authorList>
    </citation>
    <scope>NUCLEOTIDE SEQUENCE [GENOMIC DNA]</scope>
    <source>
        <strain>ATCC 9937 / LMG 1404 / NCIMB 8084</strain>
    </source>
</reference>
<reference key="2">
    <citation type="journal article" date="2005" name="Nat. Biotechnol.">
        <title>Complete genome sequence of the acetic acid bacterium Gluconobacter oxydans.</title>
        <authorList>
            <person name="Prust C."/>
            <person name="Hoffmeister M."/>
            <person name="Liesegang H."/>
            <person name="Wiezer A."/>
            <person name="Fricke W.F."/>
            <person name="Ehrenreich A."/>
            <person name="Gottschalk G."/>
            <person name="Deppenmeier U."/>
        </authorList>
    </citation>
    <scope>NUCLEOTIDE SEQUENCE [LARGE SCALE GENOMIC DNA]</scope>
    <source>
        <strain>621H</strain>
    </source>
</reference>